<dbReference type="GO" id="GO:0005576">
    <property type="term" value="C:extracellular region"/>
    <property type="evidence" value="ECO:0007669"/>
    <property type="project" value="UniProtKB-SubCell"/>
</dbReference>
<dbReference type="GO" id="GO:0030414">
    <property type="term" value="F:peptidase inhibitor activity"/>
    <property type="evidence" value="ECO:0007669"/>
    <property type="project" value="UniProtKB-KW"/>
</dbReference>
<dbReference type="GO" id="GO:0090729">
    <property type="term" value="F:toxin activity"/>
    <property type="evidence" value="ECO:0007669"/>
    <property type="project" value="UniProtKB-KW"/>
</dbReference>
<dbReference type="GO" id="GO:0008217">
    <property type="term" value="P:regulation of blood pressure"/>
    <property type="evidence" value="ECO:0007669"/>
    <property type="project" value="UniProtKB-KW"/>
</dbReference>
<reference key="1">
    <citation type="journal article" date="2005" name="Rapid Commun. Mass Spectrom.">
        <title>Fast analysis of low molecular mass compounds present in snake venom: identification of ten new pyroglutamate-containing peptides.</title>
        <authorList>
            <person name="Wermelinger L.S."/>
            <person name="Dutra D.L."/>
            <person name="Oliveira-Carvalho A.L."/>
            <person name="Soares M.R."/>
            <person name="Bloch C. Jr."/>
            <person name="Zingali R.B."/>
        </authorList>
    </citation>
    <scope>PROTEIN SEQUENCE</scope>
    <scope>SUBCELLULAR LOCATION</scope>
    <scope>TISSUE SPECIFICITY</scope>
    <scope>MASS SPECTROMETRY</scope>
    <scope>PYROGLUTAMATE FORMATION AT GLN-1</scope>
    <source>
        <tissue>Venom</tissue>
    </source>
</reference>
<sequence length="11" mass="1133">QGGAPWNPIPP</sequence>
<proteinExistence type="evidence at protein level"/>
<protein>
    <recommendedName>
        <fullName>Bradykinin-potentiating peptide 11b</fullName>
        <shortName>BPP-11b</shortName>
    </recommendedName>
</protein>
<organism>
    <name type="scientific">Crotalus viridis viridis</name>
    <name type="common">Prairie rattlesnake</name>
    <dbReference type="NCBI Taxonomy" id="8742"/>
    <lineage>
        <taxon>Eukaryota</taxon>
        <taxon>Metazoa</taxon>
        <taxon>Chordata</taxon>
        <taxon>Craniata</taxon>
        <taxon>Vertebrata</taxon>
        <taxon>Euteleostomi</taxon>
        <taxon>Lepidosauria</taxon>
        <taxon>Squamata</taxon>
        <taxon>Bifurcata</taxon>
        <taxon>Unidentata</taxon>
        <taxon>Episquamata</taxon>
        <taxon>Toxicofera</taxon>
        <taxon>Serpentes</taxon>
        <taxon>Colubroidea</taxon>
        <taxon>Viperidae</taxon>
        <taxon>Crotalinae</taxon>
        <taxon>Crotalus</taxon>
    </lineage>
</organism>
<feature type="peptide" id="PRO_0000335878" description="Bradykinin-potentiating peptide 11b">
    <location>
        <begin position="1"/>
        <end position="11"/>
    </location>
</feature>
<feature type="modified residue" description="Pyrrolidone carboxylic acid" evidence="2">
    <location>
        <position position="1"/>
    </location>
</feature>
<comment type="function">
    <text evidence="1">This peptide both inhibits the activity of the angiotensin-converting enzyme (ACE) and enhances the action of bradykinin by inhibiting the peptidases that inactivate it. It acts as an indirect hypotensive agent (By similarity).</text>
</comment>
<comment type="subcellular location">
    <subcellularLocation>
        <location evidence="2">Secreted</location>
    </subcellularLocation>
</comment>
<comment type="tissue specificity">
    <text evidence="2">Expressed by the venom gland.</text>
</comment>
<comment type="mass spectrometry" mass="1116.65" method="MALDI" evidence="2"/>
<comment type="similarity">
    <text evidence="3">Belongs to the bradykinin-potentiating peptide family.</text>
</comment>
<name>BP11B_CROVV</name>
<accession>P0C7K2</accession>
<evidence type="ECO:0000250" key="1"/>
<evidence type="ECO:0000269" key="2">
    <source>
    </source>
</evidence>
<evidence type="ECO:0000305" key="3"/>
<keyword id="KW-0903">Direct protein sequencing</keyword>
<keyword id="KW-0382">Hypotensive agent</keyword>
<keyword id="KW-0481">Metalloenzyme inhibitor</keyword>
<keyword id="KW-0483">Metalloprotease inhibitor</keyword>
<keyword id="KW-0646">Protease inhibitor</keyword>
<keyword id="KW-0873">Pyrrolidone carboxylic acid</keyword>
<keyword id="KW-0964">Secreted</keyword>
<keyword id="KW-0800">Toxin</keyword>